<comment type="catalytic activity">
    <reaction>
        <text>6 oxidized [2Fe-2S]-[ferredoxin] + NH4(+) + 2 H2O = nitrite + 6 reduced [2Fe-2S]-[ferredoxin] + 8 H(+)</text>
        <dbReference type="Rhea" id="RHEA:18041"/>
        <dbReference type="Rhea" id="RHEA-COMP:10000"/>
        <dbReference type="Rhea" id="RHEA-COMP:10001"/>
        <dbReference type="ChEBI" id="CHEBI:15377"/>
        <dbReference type="ChEBI" id="CHEBI:15378"/>
        <dbReference type="ChEBI" id="CHEBI:16301"/>
        <dbReference type="ChEBI" id="CHEBI:28938"/>
        <dbReference type="ChEBI" id="CHEBI:33737"/>
        <dbReference type="ChEBI" id="CHEBI:33738"/>
        <dbReference type="EC" id="1.7.7.1"/>
    </reaction>
</comment>
<comment type="cofactor">
    <cofactor>
        <name>siroheme</name>
        <dbReference type="ChEBI" id="CHEBI:60052"/>
    </cofactor>
    <text>Binds 1 siroheme per subunit.</text>
</comment>
<comment type="cofactor">
    <cofactor evidence="1">
        <name>[4Fe-4S] cluster</name>
        <dbReference type="ChEBI" id="CHEBI:49883"/>
    </cofactor>
    <text evidence="1">Binds 1 [4Fe-4S] cluster per subunit.</text>
</comment>
<comment type="pathway">
    <text>Nitrogen metabolism; nitrate reduction (assimilation).</text>
</comment>
<comment type="subunit">
    <text>Monomer.</text>
</comment>
<comment type="subcellular location">
    <subcellularLocation>
        <location>Plastid</location>
        <location>Chloroplast</location>
    </subcellularLocation>
</comment>
<comment type="induction">
    <text>By nitrate.</text>
</comment>
<comment type="similarity">
    <text evidence="3">Belongs to the nitrite and sulfite reductase 4Fe-4S domain family.</text>
</comment>
<comment type="sequence caution" evidence="3">
    <conflict type="erroneous initiation">
        <sequence resource="EMBL-CDS" id="AAA60450"/>
    </conflict>
</comment>
<sequence length="569" mass="63342">IPGRTGRARAAVSVPPPAGEQVPTERLEPRVEERAGGYWVLKEKYRAGLNPQEKVKLEKEPMALFMEGGIQDLARVPMEQIDAAKLTKDDVDVRLKWLGLFHRRKHQYGRFMMRLKLPNGVTTSEQTRYLASVIEAYGADGCADVTTRQNWQIRGVTLPDVPAILDGLRAVGLTSLQSGMDNVRNPVGNPLAGVDPHEIVDTRPYTNLLSSYVTNNSQGNPTITNLPRKWNVCVIGSHDLYEHPHINDLAYMPAVKDGEFGFNLLVGGFISPKRWAEALPLDAWVAGDDVVPVCKAILEAYRDLGSRGNRQKTRMMWLIDELGMEVFRSEVEKRMPNGVLERAAPEDLVDKRWERRDYLGVHPQKQEGLSYVGLHVPVGRLQAADMFELARLADEYGTGELRLTVEQNIVLPNVSNERLDALLAEPLLQEQRLSPRPSMLLRGLVACTGNQFCGQAIIETKARALQVAREVEKRVAVPRPVRMHWTGCPNSCGQVQVADIGFMGCLTKDSDGKIVEAADIFVGGRVGSDSHLADVYRKSVPCKDLVPIVADLLVERFGAVPREREEDEE</sequence>
<accession>P17847</accession>
<feature type="transit peptide" description="Chloroplast">
    <location>
        <begin position="1" status="less than"/>
        <end position="4"/>
    </location>
</feature>
<feature type="chain" id="PRO_0000019705" description="Ferredoxin--nitrite reductase, chloroplastic">
    <location>
        <begin position="5"/>
        <end position="569"/>
    </location>
</feature>
<feature type="region of interest" description="Disordered" evidence="2">
    <location>
        <begin position="1"/>
        <end position="28"/>
    </location>
</feature>
<feature type="binding site" evidence="1">
    <location>
        <position position="447"/>
    </location>
    <ligand>
        <name>[4Fe-4S] cluster</name>
        <dbReference type="ChEBI" id="CHEBI:49883"/>
    </ligand>
</feature>
<feature type="binding site" evidence="1">
    <location>
        <position position="453"/>
    </location>
    <ligand>
        <name>[4Fe-4S] cluster</name>
        <dbReference type="ChEBI" id="CHEBI:49883"/>
    </ligand>
</feature>
<feature type="binding site" evidence="1">
    <location>
        <position position="488"/>
    </location>
    <ligand>
        <name>[4Fe-4S] cluster</name>
        <dbReference type="ChEBI" id="CHEBI:49883"/>
    </ligand>
</feature>
<feature type="binding site" evidence="1">
    <location>
        <position position="492"/>
    </location>
    <ligand>
        <name>[4Fe-4S] cluster</name>
        <dbReference type="ChEBI" id="CHEBI:49883"/>
    </ligand>
</feature>
<feature type="binding site" description="axial binding residue" evidence="1">
    <location>
        <position position="492"/>
    </location>
    <ligand>
        <name>siroheme</name>
        <dbReference type="ChEBI" id="CHEBI:60052"/>
    </ligand>
    <ligandPart>
        <name>Fe</name>
        <dbReference type="ChEBI" id="CHEBI:18248"/>
    </ligandPart>
</feature>
<feature type="non-terminal residue">
    <location>
        <position position="1"/>
    </location>
</feature>
<dbReference type="EC" id="1.7.7.1"/>
<dbReference type="EMBL" id="M23456">
    <property type="protein sequence ID" value="AAA60450.1"/>
    <property type="status" value="ALT_INIT"/>
    <property type="molecule type" value="mRNA"/>
</dbReference>
<dbReference type="PIR" id="JA0172">
    <property type="entry name" value="JA0172"/>
</dbReference>
<dbReference type="SMR" id="P17847"/>
<dbReference type="FunCoup" id="P17847">
    <property type="interactions" value="161"/>
</dbReference>
<dbReference type="STRING" id="4577.P17847"/>
<dbReference type="PaxDb" id="4577-GRMZM2G079381_P01"/>
<dbReference type="MaizeGDB" id="69266"/>
<dbReference type="eggNOG" id="KOG0560">
    <property type="taxonomic scope" value="Eukaryota"/>
</dbReference>
<dbReference type="InParanoid" id="P17847"/>
<dbReference type="UniPathway" id="UPA00653"/>
<dbReference type="Proteomes" id="UP000007305">
    <property type="component" value="Unplaced"/>
</dbReference>
<dbReference type="ExpressionAtlas" id="P17847">
    <property type="expression patterns" value="baseline and differential"/>
</dbReference>
<dbReference type="GO" id="GO:0009507">
    <property type="term" value="C:chloroplast"/>
    <property type="evidence" value="ECO:0007669"/>
    <property type="project" value="UniProtKB-SubCell"/>
</dbReference>
<dbReference type="GO" id="GO:0051539">
    <property type="term" value="F:4 iron, 4 sulfur cluster binding"/>
    <property type="evidence" value="ECO:0007669"/>
    <property type="project" value="UniProtKB-KW"/>
</dbReference>
<dbReference type="GO" id="GO:0048307">
    <property type="term" value="F:ferredoxin-nitrite reductase activity"/>
    <property type="evidence" value="ECO:0007669"/>
    <property type="project" value="UniProtKB-EC"/>
</dbReference>
<dbReference type="GO" id="GO:0020037">
    <property type="term" value="F:heme binding"/>
    <property type="evidence" value="ECO:0007669"/>
    <property type="project" value="InterPro"/>
</dbReference>
<dbReference type="GO" id="GO:0046872">
    <property type="term" value="F:metal ion binding"/>
    <property type="evidence" value="ECO:0007669"/>
    <property type="project" value="UniProtKB-KW"/>
</dbReference>
<dbReference type="GO" id="GO:0042128">
    <property type="term" value="P:nitrate assimilation"/>
    <property type="evidence" value="ECO:0007669"/>
    <property type="project" value="UniProtKB-UniPathway"/>
</dbReference>
<dbReference type="Gene3D" id="3.90.480.20">
    <property type="match status" value="1"/>
</dbReference>
<dbReference type="Gene3D" id="3.30.413.10">
    <property type="entry name" value="Sulfite Reductase Hemoprotein, domain 1"/>
    <property type="match status" value="2"/>
</dbReference>
<dbReference type="InterPro" id="IPR051329">
    <property type="entry name" value="NIR_SIR_4Fe-4S"/>
</dbReference>
<dbReference type="InterPro" id="IPR005117">
    <property type="entry name" value="NiRdtase/SiRdtase_haem-b_fer"/>
</dbReference>
<dbReference type="InterPro" id="IPR036136">
    <property type="entry name" value="Nit/Sulf_reduc_fer-like_dom_sf"/>
</dbReference>
<dbReference type="InterPro" id="IPR006067">
    <property type="entry name" value="NO2/SO3_Rdtase_4Fe4S_dom"/>
</dbReference>
<dbReference type="InterPro" id="IPR045854">
    <property type="entry name" value="NO2/SO3_Rdtase_4Fe4S_sf"/>
</dbReference>
<dbReference type="InterPro" id="IPR006066">
    <property type="entry name" value="NO2/SO3_Rdtase_FeS/sirohaem_BS"/>
</dbReference>
<dbReference type="NCBIfam" id="NF007125">
    <property type="entry name" value="PRK09566.1"/>
    <property type="match status" value="1"/>
</dbReference>
<dbReference type="PANTHER" id="PTHR32439">
    <property type="entry name" value="FERREDOXIN--NITRITE REDUCTASE, CHLOROPLASTIC"/>
    <property type="match status" value="1"/>
</dbReference>
<dbReference type="PANTHER" id="PTHR32439:SF0">
    <property type="entry name" value="FERREDOXIN--NITRITE REDUCTASE, CHLOROPLASTIC"/>
    <property type="match status" value="1"/>
</dbReference>
<dbReference type="Pfam" id="PF01077">
    <property type="entry name" value="NIR_SIR"/>
    <property type="match status" value="2"/>
</dbReference>
<dbReference type="Pfam" id="PF03460">
    <property type="entry name" value="NIR_SIR_ferr"/>
    <property type="match status" value="2"/>
</dbReference>
<dbReference type="PRINTS" id="PR00397">
    <property type="entry name" value="SIROHAEM"/>
</dbReference>
<dbReference type="SUPFAM" id="SSF56014">
    <property type="entry name" value="Nitrite and sulphite reductase 4Fe-4S domain-like"/>
    <property type="match status" value="2"/>
</dbReference>
<dbReference type="SUPFAM" id="SSF55124">
    <property type="entry name" value="Nitrite/Sulfite reductase N-terminal domain-like"/>
    <property type="match status" value="2"/>
</dbReference>
<dbReference type="PROSITE" id="PS00365">
    <property type="entry name" value="NIR_SIR"/>
    <property type="match status" value="1"/>
</dbReference>
<evidence type="ECO:0000250" key="1"/>
<evidence type="ECO:0000256" key="2">
    <source>
        <dbReference type="SAM" id="MobiDB-lite"/>
    </source>
</evidence>
<evidence type="ECO:0000305" key="3"/>
<reference key="1">
    <citation type="journal article" date="1988" name="Plant Physiol.">
        <title>Molecular cloning of complementary DNA encoding maize nitrite reductase: molecular analysis and nitrate induction.</title>
        <authorList>
            <person name="Lahners K."/>
            <person name="Kramer V."/>
            <person name="Back E."/>
            <person name="Privalle L."/>
            <person name="Rothstein S."/>
        </authorList>
    </citation>
    <scope>NUCLEOTIDE SEQUENCE [MRNA]</scope>
</reference>
<keyword id="KW-0004">4Fe-4S</keyword>
<keyword id="KW-0150">Chloroplast</keyword>
<keyword id="KW-0249">Electron transport</keyword>
<keyword id="KW-0349">Heme</keyword>
<keyword id="KW-0408">Iron</keyword>
<keyword id="KW-0411">Iron-sulfur</keyword>
<keyword id="KW-0479">Metal-binding</keyword>
<keyword id="KW-0534">Nitrate assimilation</keyword>
<keyword id="KW-0560">Oxidoreductase</keyword>
<keyword id="KW-0934">Plastid</keyword>
<keyword id="KW-1185">Reference proteome</keyword>
<keyword id="KW-0809">Transit peptide</keyword>
<keyword id="KW-0813">Transport</keyword>
<gene>
    <name type="primary">NIR</name>
</gene>
<name>NIR_MAIZE</name>
<proteinExistence type="evidence at transcript level"/>
<organism>
    <name type="scientific">Zea mays</name>
    <name type="common">Maize</name>
    <dbReference type="NCBI Taxonomy" id="4577"/>
    <lineage>
        <taxon>Eukaryota</taxon>
        <taxon>Viridiplantae</taxon>
        <taxon>Streptophyta</taxon>
        <taxon>Embryophyta</taxon>
        <taxon>Tracheophyta</taxon>
        <taxon>Spermatophyta</taxon>
        <taxon>Magnoliopsida</taxon>
        <taxon>Liliopsida</taxon>
        <taxon>Poales</taxon>
        <taxon>Poaceae</taxon>
        <taxon>PACMAD clade</taxon>
        <taxon>Panicoideae</taxon>
        <taxon>Andropogonodae</taxon>
        <taxon>Andropogoneae</taxon>
        <taxon>Tripsacinae</taxon>
        <taxon>Zea</taxon>
    </lineage>
</organism>
<protein>
    <recommendedName>
        <fullName>Ferredoxin--nitrite reductase, chloroplastic</fullName>
        <ecNumber>1.7.7.1</ecNumber>
    </recommendedName>
</protein>